<organism>
    <name type="scientific">Cyanothece sp. (strain PCC 7425 / ATCC 29141)</name>
    <dbReference type="NCBI Taxonomy" id="395961"/>
    <lineage>
        <taxon>Bacteria</taxon>
        <taxon>Bacillati</taxon>
        <taxon>Cyanobacteriota</taxon>
        <taxon>Cyanophyceae</taxon>
        <taxon>Gomontiellales</taxon>
        <taxon>Cyanothecaceae</taxon>
        <taxon>Cyanothece</taxon>
    </lineage>
</organism>
<sequence>MAHKKGTGSTRNGRDSNAQRLGVKRYGGEVVRAGNILVRQRGTKFHPGNNVGRGNDDTLFATIDGVVTFERYGKDRKRISVYPVAAAAS</sequence>
<name>RL27_CYAP4</name>
<comment type="similarity">
    <text evidence="1">Belongs to the bacterial ribosomal protein bL27 family.</text>
</comment>
<evidence type="ECO:0000255" key="1">
    <source>
        <dbReference type="HAMAP-Rule" id="MF_00539"/>
    </source>
</evidence>
<evidence type="ECO:0000256" key="2">
    <source>
        <dbReference type="SAM" id="MobiDB-lite"/>
    </source>
</evidence>
<evidence type="ECO:0000305" key="3"/>
<proteinExistence type="inferred from homology"/>
<feature type="chain" id="PRO_1000146525" description="Large ribosomal subunit protein bL27">
    <location>
        <begin position="1"/>
        <end position="89"/>
    </location>
</feature>
<feature type="region of interest" description="Disordered" evidence="2">
    <location>
        <begin position="1"/>
        <end position="22"/>
    </location>
</feature>
<feature type="compositionally biased region" description="Polar residues" evidence="2">
    <location>
        <begin position="7"/>
        <end position="19"/>
    </location>
</feature>
<keyword id="KW-0687">Ribonucleoprotein</keyword>
<keyword id="KW-0689">Ribosomal protein</keyword>
<gene>
    <name evidence="1" type="primary">rpmA</name>
    <name evidence="1" type="synonym">rpl27</name>
    <name type="ordered locus">Cyan7425_0647</name>
</gene>
<protein>
    <recommendedName>
        <fullName evidence="1">Large ribosomal subunit protein bL27</fullName>
    </recommendedName>
    <alternativeName>
        <fullName evidence="3">50S ribosomal protein L27</fullName>
    </alternativeName>
</protein>
<reference key="1">
    <citation type="journal article" date="2011" name="MBio">
        <title>Novel metabolic attributes of the genus Cyanothece, comprising a group of unicellular nitrogen-fixing Cyanobacteria.</title>
        <authorList>
            <person name="Bandyopadhyay A."/>
            <person name="Elvitigala T."/>
            <person name="Welsh E."/>
            <person name="Stockel J."/>
            <person name="Liberton M."/>
            <person name="Min H."/>
            <person name="Sherman L.A."/>
            <person name="Pakrasi H.B."/>
        </authorList>
    </citation>
    <scope>NUCLEOTIDE SEQUENCE [LARGE SCALE GENOMIC DNA]</scope>
    <source>
        <strain>PCC 7425 / ATCC 29141</strain>
    </source>
</reference>
<dbReference type="EMBL" id="CP001344">
    <property type="protein sequence ID" value="ACL43035.1"/>
    <property type="molecule type" value="Genomic_DNA"/>
</dbReference>
<dbReference type="SMR" id="B8HUY8"/>
<dbReference type="STRING" id="395961.Cyan7425_0647"/>
<dbReference type="KEGG" id="cyn:Cyan7425_0647"/>
<dbReference type="eggNOG" id="COG0211">
    <property type="taxonomic scope" value="Bacteria"/>
</dbReference>
<dbReference type="HOGENOM" id="CLU_095424_4_0_3"/>
<dbReference type="OrthoDB" id="9803474at2"/>
<dbReference type="GO" id="GO:0022625">
    <property type="term" value="C:cytosolic large ribosomal subunit"/>
    <property type="evidence" value="ECO:0007669"/>
    <property type="project" value="TreeGrafter"/>
</dbReference>
<dbReference type="GO" id="GO:0003735">
    <property type="term" value="F:structural constituent of ribosome"/>
    <property type="evidence" value="ECO:0007669"/>
    <property type="project" value="InterPro"/>
</dbReference>
<dbReference type="GO" id="GO:0006412">
    <property type="term" value="P:translation"/>
    <property type="evidence" value="ECO:0007669"/>
    <property type="project" value="UniProtKB-UniRule"/>
</dbReference>
<dbReference type="FunFam" id="2.40.50.100:FF:000004">
    <property type="entry name" value="50S ribosomal protein L27"/>
    <property type="match status" value="1"/>
</dbReference>
<dbReference type="Gene3D" id="2.40.50.100">
    <property type="match status" value="1"/>
</dbReference>
<dbReference type="HAMAP" id="MF_00539">
    <property type="entry name" value="Ribosomal_bL27"/>
    <property type="match status" value="1"/>
</dbReference>
<dbReference type="InterPro" id="IPR001684">
    <property type="entry name" value="Ribosomal_bL27"/>
</dbReference>
<dbReference type="InterPro" id="IPR018261">
    <property type="entry name" value="Ribosomal_bL27_CS"/>
</dbReference>
<dbReference type="NCBIfam" id="TIGR00062">
    <property type="entry name" value="L27"/>
    <property type="match status" value="1"/>
</dbReference>
<dbReference type="PANTHER" id="PTHR15893:SF0">
    <property type="entry name" value="LARGE RIBOSOMAL SUBUNIT PROTEIN BL27M"/>
    <property type="match status" value="1"/>
</dbReference>
<dbReference type="PANTHER" id="PTHR15893">
    <property type="entry name" value="RIBOSOMAL PROTEIN L27"/>
    <property type="match status" value="1"/>
</dbReference>
<dbReference type="Pfam" id="PF01016">
    <property type="entry name" value="Ribosomal_L27"/>
    <property type="match status" value="1"/>
</dbReference>
<dbReference type="PRINTS" id="PR00063">
    <property type="entry name" value="RIBOSOMALL27"/>
</dbReference>
<dbReference type="SUPFAM" id="SSF110324">
    <property type="entry name" value="Ribosomal L27 protein-like"/>
    <property type="match status" value="1"/>
</dbReference>
<dbReference type="PROSITE" id="PS00831">
    <property type="entry name" value="RIBOSOMAL_L27"/>
    <property type="match status" value="1"/>
</dbReference>
<accession>B8HUY8</accession>